<comment type="function">
    <text evidence="1">Involved in chemotaxis. Part of a chemotaxis signal transduction system that modulates chemotaxis in response to various stimuli. Catalyzes the demethylation of specific methylglutamate residues introduced into the chemoreceptors (methyl-accepting chemotaxis proteins or MCP) by CheR. Also mediates the irreversible deamidation of specific glutamine residues to glutamic acid.</text>
</comment>
<comment type="catalytic activity">
    <reaction evidence="1">
        <text>[protein]-L-glutamate 5-O-methyl ester + H2O = L-glutamyl-[protein] + methanol + H(+)</text>
        <dbReference type="Rhea" id="RHEA:23236"/>
        <dbReference type="Rhea" id="RHEA-COMP:10208"/>
        <dbReference type="Rhea" id="RHEA-COMP:10311"/>
        <dbReference type="ChEBI" id="CHEBI:15377"/>
        <dbReference type="ChEBI" id="CHEBI:15378"/>
        <dbReference type="ChEBI" id="CHEBI:17790"/>
        <dbReference type="ChEBI" id="CHEBI:29973"/>
        <dbReference type="ChEBI" id="CHEBI:82795"/>
        <dbReference type="EC" id="3.1.1.61"/>
    </reaction>
</comment>
<comment type="catalytic activity">
    <reaction evidence="1">
        <text>L-glutaminyl-[protein] + H2O = L-glutamyl-[protein] + NH4(+)</text>
        <dbReference type="Rhea" id="RHEA:16441"/>
        <dbReference type="Rhea" id="RHEA-COMP:10207"/>
        <dbReference type="Rhea" id="RHEA-COMP:10208"/>
        <dbReference type="ChEBI" id="CHEBI:15377"/>
        <dbReference type="ChEBI" id="CHEBI:28938"/>
        <dbReference type="ChEBI" id="CHEBI:29973"/>
        <dbReference type="ChEBI" id="CHEBI:30011"/>
        <dbReference type="EC" id="3.5.1.44"/>
    </reaction>
</comment>
<comment type="subcellular location">
    <subcellularLocation>
        <location evidence="1">Cytoplasm</location>
    </subcellularLocation>
</comment>
<comment type="domain">
    <text evidence="1">Contains a C-terminal catalytic domain, and an N-terminal region which modulates catalytic activity.</text>
</comment>
<comment type="PTM">
    <text evidence="1">Phosphorylated by CheA. Phosphorylation of the N-terminal regulatory domain activates the methylesterase activity.</text>
</comment>
<comment type="similarity">
    <text evidence="1">Belongs to the CheB family.</text>
</comment>
<gene>
    <name evidence="1" type="primary">cheB1</name>
    <name type="ordered locus">PSPPH_0800</name>
</gene>
<name>CHEB1_PSE14</name>
<proteinExistence type="inferred from homology"/>
<organism>
    <name type="scientific">Pseudomonas savastanoi pv. phaseolicola (strain 1448A / Race 6)</name>
    <name type="common">Pseudomonas syringae pv. phaseolicola (strain 1448A / Race 6)</name>
    <dbReference type="NCBI Taxonomy" id="264730"/>
    <lineage>
        <taxon>Bacteria</taxon>
        <taxon>Pseudomonadati</taxon>
        <taxon>Pseudomonadota</taxon>
        <taxon>Gammaproteobacteria</taxon>
        <taxon>Pseudomonadales</taxon>
        <taxon>Pseudomonadaceae</taxon>
        <taxon>Pseudomonas</taxon>
    </lineage>
</organism>
<accession>Q48ND9</accession>
<evidence type="ECO:0000255" key="1">
    <source>
        <dbReference type="HAMAP-Rule" id="MF_00099"/>
    </source>
</evidence>
<protein>
    <recommendedName>
        <fullName evidence="1">Protein-glutamate methylesterase/protein-glutamine glutaminase 1</fullName>
        <ecNumber evidence="1">3.1.1.61</ecNumber>
        <ecNumber evidence="1">3.5.1.44</ecNumber>
    </recommendedName>
</protein>
<feature type="chain" id="PRO_0000225473" description="Protein-glutamate methylesterase/protein-glutamine glutaminase 1">
    <location>
        <begin position="1"/>
        <end position="358"/>
    </location>
</feature>
<feature type="domain" description="Response regulatory" evidence="1">
    <location>
        <begin position="7"/>
        <end position="124"/>
    </location>
</feature>
<feature type="domain" description="CheB-type methylesterase" evidence="1">
    <location>
        <begin position="170"/>
        <end position="358"/>
    </location>
</feature>
<feature type="active site" evidence="1">
    <location>
        <position position="182"/>
    </location>
</feature>
<feature type="active site" evidence="1">
    <location>
        <position position="208"/>
    </location>
</feature>
<feature type="active site" evidence="1">
    <location>
        <position position="304"/>
    </location>
</feature>
<feature type="modified residue" description="4-aspartylphosphate" evidence="1">
    <location>
        <position position="58"/>
    </location>
</feature>
<reference key="1">
    <citation type="journal article" date="2005" name="J. Bacteriol.">
        <title>Whole-genome sequence analysis of Pseudomonas syringae pv. phaseolicola 1448A reveals divergence among pathovars in genes involved in virulence and transposition.</title>
        <authorList>
            <person name="Joardar V."/>
            <person name="Lindeberg M."/>
            <person name="Jackson R.W."/>
            <person name="Selengut J."/>
            <person name="Dodson R."/>
            <person name="Brinkac L.M."/>
            <person name="Daugherty S.C."/>
            <person name="DeBoy R.T."/>
            <person name="Durkin A.S."/>
            <person name="Gwinn Giglio M."/>
            <person name="Madupu R."/>
            <person name="Nelson W.C."/>
            <person name="Rosovitz M.J."/>
            <person name="Sullivan S.A."/>
            <person name="Crabtree J."/>
            <person name="Creasy T."/>
            <person name="Davidsen T.M."/>
            <person name="Haft D.H."/>
            <person name="Zafar N."/>
            <person name="Zhou L."/>
            <person name="Halpin R."/>
            <person name="Holley T."/>
            <person name="Khouri H.M."/>
            <person name="Feldblyum T.V."/>
            <person name="White O."/>
            <person name="Fraser C.M."/>
            <person name="Chatterjee A.K."/>
            <person name="Cartinhour S."/>
            <person name="Schneider D."/>
            <person name="Mansfield J.W."/>
            <person name="Collmer A."/>
            <person name="Buell R."/>
        </authorList>
    </citation>
    <scope>NUCLEOTIDE SEQUENCE [LARGE SCALE GENOMIC DNA]</scope>
    <source>
        <strain>1448A / Race 6</strain>
    </source>
</reference>
<dbReference type="EC" id="3.1.1.61" evidence="1"/>
<dbReference type="EC" id="3.5.1.44" evidence="1"/>
<dbReference type="EMBL" id="CP000058">
    <property type="protein sequence ID" value="AAZ36844.1"/>
    <property type="molecule type" value="Genomic_DNA"/>
</dbReference>
<dbReference type="RefSeq" id="WP_011167712.1">
    <property type="nucleotide sequence ID" value="NC_005773.3"/>
</dbReference>
<dbReference type="SMR" id="Q48ND9"/>
<dbReference type="KEGG" id="psp:PSPPH_0800"/>
<dbReference type="eggNOG" id="COG2201">
    <property type="taxonomic scope" value="Bacteria"/>
</dbReference>
<dbReference type="HOGENOM" id="CLU_000445_51_0_6"/>
<dbReference type="Proteomes" id="UP000000551">
    <property type="component" value="Chromosome"/>
</dbReference>
<dbReference type="GO" id="GO:0005737">
    <property type="term" value="C:cytoplasm"/>
    <property type="evidence" value="ECO:0007669"/>
    <property type="project" value="UniProtKB-SubCell"/>
</dbReference>
<dbReference type="GO" id="GO:0000156">
    <property type="term" value="F:phosphorelay response regulator activity"/>
    <property type="evidence" value="ECO:0007669"/>
    <property type="project" value="InterPro"/>
</dbReference>
<dbReference type="GO" id="GO:0008984">
    <property type="term" value="F:protein-glutamate methylesterase activity"/>
    <property type="evidence" value="ECO:0007669"/>
    <property type="project" value="UniProtKB-UniRule"/>
</dbReference>
<dbReference type="GO" id="GO:0050568">
    <property type="term" value="F:protein-glutamine glutaminase activity"/>
    <property type="evidence" value="ECO:0007669"/>
    <property type="project" value="UniProtKB-UniRule"/>
</dbReference>
<dbReference type="GO" id="GO:0006935">
    <property type="term" value="P:chemotaxis"/>
    <property type="evidence" value="ECO:0007669"/>
    <property type="project" value="UniProtKB-UniRule"/>
</dbReference>
<dbReference type="CDD" id="cd16432">
    <property type="entry name" value="CheB_Rec"/>
    <property type="match status" value="1"/>
</dbReference>
<dbReference type="CDD" id="cd17541">
    <property type="entry name" value="REC_CheB-like"/>
    <property type="match status" value="1"/>
</dbReference>
<dbReference type="Gene3D" id="3.40.50.2300">
    <property type="match status" value="1"/>
</dbReference>
<dbReference type="Gene3D" id="3.40.50.180">
    <property type="entry name" value="Methylesterase CheB, C-terminal domain"/>
    <property type="match status" value="1"/>
</dbReference>
<dbReference type="HAMAP" id="MF_00099">
    <property type="entry name" value="CheB_chemtxs"/>
    <property type="match status" value="1"/>
</dbReference>
<dbReference type="InterPro" id="IPR008248">
    <property type="entry name" value="CheB-like"/>
</dbReference>
<dbReference type="InterPro" id="IPR035909">
    <property type="entry name" value="CheB_C"/>
</dbReference>
<dbReference type="InterPro" id="IPR011006">
    <property type="entry name" value="CheY-like_superfamily"/>
</dbReference>
<dbReference type="InterPro" id="IPR000673">
    <property type="entry name" value="Sig_transdc_resp-reg_Me-estase"/>
</dbReference>
<dbReference type="InterPro" id="IPR001789">
    <property type="entry name" value="Sig_transdc_resp-reg_receiver"/>
</dbReference>
<dbReference type="NCBIfam" id="NF001965">
    <property type="entry name" value="PRK00742.1"/>
    <property type="match status" value="1"/>
</dbReference>
<dbReference type="NCBIfam" id="NF009206">
    <property type="entry name" value="PRK12555.1"/>
    <property type="match status" value="1"/>
</dbReference>
<dbReference type="PANTHER" id="PTHR42872">
    <property type="entry name" value="PROTEIN-GLUTAMATE METHYLESTERASE/PROTEIN-GLUTAMINE GLUTAMINASE"/>
    <property type="match status" value="1"/>
</dbReference>
<dbReference type="PANTHER" id="PTHR42872:SF6">
    <property type="entry name" value="PROTEIN-GLUTAMATE METHYLESTERASE_PROTEIN-GLUTAMINE GLUTAMINASE"/>
    <property type="match status" value="1"/>
</dbReference>
<dbReference type="Pfam" id="PF01339">
    <property type="entry name" value="CheB_methylest"/>
    <property type="match status" value="1"/>
</dbReference>
<dbReference type="Pfam" id="PF00072">
    <property type="entry name" value="Response_reg"/>
    <property type="match status" value="1"/>
</dbReference>
<dbReference type="PIRSF" id="PIRSF000876">
    <property type="entry name" value="RR_chemtxs_CheB"/>
    <property type="match status" value="1"/>
</dbReference>
<dbReference type="SMART" id="SM00448">
    <property type="entry name" value="REC"/>
    <property type="match status" value="1"/>
</dbReference>
<dbReference type="SUPFAM" id="SSF52172">
    <property type="entry name" value="CheY-like"/>
    <property type="match status" value="1"/>
</dbReference>
<dbReference type="SUPFAM" id="SSF52738">
    <property type="entry name" value="Methylesterase CheB, C-terminal domain"/>
    <property type="match status" value="1"/>
</dbReference>
<dbReference type="PROSITE" id="PS50122">
    <property type="entry name" value="CHEB"/>
    <property type="match status" value="1"/>
</dbReference>
<dbReference type="PROSITE" id="PS50110">
    <property type="entry name" value="RESPONSE_REGULATORY"/>
    <property type="match status" value="1"/>
</dbReference>
<keyword id="KW-0145">Chemotaxis</keyword>
<keyword id="KW-0963">Cytoplasm</keyword>
<keyword id="KW-0378">Hydrolase</keyword>
<keyword id="KW-0597">Phosphoprotein</keyword>
<sequence>MPNKKISVLLVDDSAVVRQVLVAILNDTPDIHVMGAATDPIFAMAKLAQEWPDVIVLDVEMPRMDGITFLKKIMSERPTPVVICSSLTQKGAETSLQALSAGAVEIITKPTTGLKNFLIDSAAELVAAVRAAANSNVKNLGKRMAPPVLAPASKLTADAILPAASGHAMAQTTERIVAIGTSTGGTQALEAVLTALPRVCPGMVIVQHMPEKFTASFAERLNGLSQIEVPEARNNDRILPGLALIAPGGKHMMVTRSGASYYVQVIDGPLVNRHRPSVDVLFRSVAKFAGKNATGIIMTGMGDDGARGLKEMLDAGSSTVAQDEASCVVFGMPKEAIKLNAAQRIMPLQEIHQAILHR</sequence>